<evidence type="ECO:0000250" key="1">
    <source>
        <dbReference type="UniProtKB" id="Q5M9H0"/>
    </source>
</evidence>
<evidence type="ECO:0000250" key="2">
    <source>
        <dbReference type="UniProtKB" id="Q6ZW76"/>
    </source>
</evidence>
<evidence type="ECO:0000255" key="3"/>
<evidence type="ECO:0000255" key="4">
    <source>
        <dbReference type="PROSITE-ProRule" id="PRU00184"/>
    </source>
</evidence>
<evidence type="ECO:0000256" key="5">
    <source>
        <dbReference type="SAM" id="MobiDB-lite"/>
    </source>
</evidence>
<evidence type="ECO:0000269" key="6">
    <source>
    </source>
</evidence>
<evidence type="ECO:0000269" key="7">
    <source>
    </source>
</evidence>
<evidence type="ECO:0000269" key="8">
    <source>
    </source>
</evidence>
<evidence type="ECO:0000305" key="9"/>
<evidence type="ECO:0007744" key="10">
    <source>
    </source>
</evidence>
<sequence length="655" mass="72082">MSELSDEASEPELLKRSLSMWHGLGAQGSPEELDVPLDLHTAASIGQHEVVKECVQRGELDLNKKNGGGWTALMYASYIGHDTIVHLLLEAGVSVNVPTPEGQTPLMLASSCGNESIAYFLLQQGAELEMKDIHGWTALFHCTSAGHQQMVKFLLESGANANVREPVYGYTPLMEAAASGHEIIVQYFLNHGVKVDTRDHSGATACMLARQFGHMKIVALMETHSPVLPKSLYRSPEKYEDLSSSDESWPVPQRQRPCRKKGLSIHEGPRALAKITAIGLGGKTQTTYEQVPPRGYVTFTSSDENTMESEGLCYRDVTSPINEQDVESSSSSSREEPTFCASLGPVWRSSSSDGLARAQGLSSEASIESNEDSDHARKSSVRKQTRSYLKNKSRHGNSDGHWPSSTGPASIPGSEPQTEKSPYSGPQDLATLLEQIGCLKYLQVFEEQDIDLRIFLTLTESDLKEIGITLFGPKRKMTSAIARWHSSARPPSDALELAYADRLETEMQELAIQLHKCCEEAEALRGQVSQEQELRAVVESCLLEQDSARKDIHAQLQEAQTLAQDAALVLDQLRACQAELSARLRQHHSPREGTPNPHFLSADSKGWPIPLQALSLPELSGALEDRVHEMGQALCSVTQSLEKLQMLNAKKWREP</sequence>
<protein>
    <recommendedName>
        <fullName>Ankyrin repeat and SAM domain-containing protein 3</fullName>
    </recommendedName>
</protein>
<proteinExistence type="evidence at protein level"/>
<dbReference type="EMBL" id="AK012494">
    <property type="protein sequence ID" value="BAB28279.1"/>
    <property type="molecule type" value="mRNA"/>
</dbReference>
<dbReference type="EMBL" id="BC050929">
    <property type="protein sequence ID" value="AAH50929.1"/>
    <property type="molecule type" value="mRNA"/>
</dbReference>
<dbReference type="EMBL" id="AK129471">
    <property type="protein sequence ID" value="BAC98281.2"/>
    <property type="molecule type" value="mRNA"/>
</dbReference>
<dbReference type="CCDS" id="CCDS27928.1"/>
<dbReference type="RefSeq" id="NP_082577.2">
    <property type="nucleotide sequence ID" value="NM_028301.5"/>
</dbReference>
<dbReference type="SMR" id="Q9CZK6"/>
<dbReference type="BioGRID" id="215473">
    <property type="interactions" value="3"/>
</dbReference>
<dbReference type="CORUM" id="Q9CZK6"/>
<dbReference type="FunCoup" id="Q9CZK6">
    <property type="interactions" value="1181"/>
</dbReference>
<dbReference type="IntAct" id="Q9CZK6">
    <property type="interactions" value="2"/>
</dbReference>
<dbReference type="STRING" id="10090.ENSMUSP00000023157"/>
<dbReference type="iPTMnet" id="Q9CZK6"/>
<dbReference type="PhosphoSitePlus" id="Q9CZK6"/>
<dbReference type="PaxDb" id="10090-ENSMUSP00000023157"/>
<dbReference type="ProteomicsDB" id="281986"/>
<dbReference type="Pumba" id="Q9CZK6"/>
<dbReference type="Antibodypedia" id="24396">
    <property type="antibodies" value="91 antibodies from 20 providers"/>
</dbReference>
<dbReference type="DNASU" id="72615"/>
<dbReference type="Ensembl" id="ENSMUST00000023157.6">
    <property type="protein sequence ID" value="ENSMUSP00000023157.5"/>
    <property type="gene ID" value="ENSMUSG00000022515.7"/>
</dbReference>
<dbReference type="GeneID" id="72615"/>
<dbReference type="KEGG" id="mmu:72615"/>
<dbReference type="UCSC" id="uc007ybb.2">
    <property type="organism name" value="mouse"/>
</dbReference>
<dbReference type="AGR" id="MGI:1919865"/>
<dbReference type="CTD" id="124401"/>
<dbReference type="MGI" id="MGI:1919865">
    <property type="gene designation" value="Anks3"/>
</dbReference>
<dbReference type="VEuPathDB" id="HostDB:ENSMUSG00000022515"/>
<dbReference type="eggNOG" id="KOG0504">
    <property type="taxonomic scope" value="Eukaryota"/>
</dbReference>
<dbReference type="GeneTree" id="ENSGT00940000156610"/>
<dbReference type="HOGENOM" id="CLU_014543_0_0_1"/>
<dbReference type="InParanoid" id="Q9CZK6"/>
<dbReference type="OMA" id="RKDVHTQ"/>
<dbReference type="OrthoDB" id="539213at2759"/>
<dbReference type="PhylomeDB" id="Q9CZK6"/>
<dbReference type="TreeFam" id="TF331487"/>
<dbReference type="BioGRID-ORCS" id="72615">
    <property type="hits" value="4 hits in 77 CRISPR screens"/>
</dbReference>
<dbReference type="ChiTaRS" id="Anks3">
    <property type="organism name" value="mouse"/>
</dbReference>
<dbReference type="PRO" id="PR:Q9CZK6"/>
<dbReference type="Proteomes" id="UP000000589">
    <property type="component" value="Chromosome 16"/>
</dbReference>
<dbReference type="RNAct" id="Q9CZK6">
    <property type="molecule type" value="protein"/>
</dbReference>
<dbReference type="Bgee" id="ENSMUSG00000022515">
    <property type="expression patterns" value="Expressed in retinal neural layer and 210 other cell types or tissues"/>
</dbReference>
<dbReference type="ExpressionAtlas" id="Q9CZK6">
    <property type="expression patterns" value="baseline and differential"/>
</dbReference>
<dbReference type="GO" id="GO:0005929">
    <property type="term" value="C:cilium"/>
    <property type="evidence" value="ECO:0000314"/>
    <property type="project" value="UniProtKB"/>
</dbReference>
<dbReference type="GO" id="GO:0005737">
    <property type="term" value="C:cytoplasm"/>
    <property type="evidence" value="ECO:0000314"/>
    <property type="project" value="UniProtKB"/>
</dbReference>
<dbReference type="CDD" id="cd09519">
    <property type="entry name" value="SAM_ANKS3"/>
    <property type="match status" value="1"/>
</dbReference>
<dbReference type="Gene3D" id="1.25.40.20">
    <property type="entry name" value="Ankyrin repeat-containing domain"/>
    <property type="match status" value="1"/>
</dbReference>
<dbReference type="Gene3D" id="1.10.150.50">
    <property type="entry name" value="Transcription Factor, Ets-1"/>
    <property type="match status" value="1"/>
</dbReference>
<dbReference type="InterPro" id="IPR047238">
    <property type="entry name" value="ANKS3_SAM"/>
</dbReference>
<dbReference type="InterPro" id="IPR002110">
    <property type="entry name" value="Ankyrin_rpt"/>
</dbReference>
<dbReference type="InterPro" id="IPR036770">
    <property type="entry name" value="Ankyrin_rpt-contain_sf"/>
</dbReference>
<dbReference type="InterPro" id="IPR001660">
    <property type="entry name" value="SAM"/>
</dbReference>
<dbReference type="InterPro" id="IPR013761">
    <property type="entry name" value="SAM/pointed_sf"/>
</dbReference>
<dbReference type="PANTHER" id="PTHR24184:SF6">
    <property type="entry name" value="ANKYRIN REPEAT AND SAM DOMAIN-CONTAINING PROTEIN 3"/>
    <property type="match status" value="1"/>
</dbReference>
<dbReference type="PANTHER" id="PTHR24184">
    <property type="entry name" value="SI:CH211-189E2.2"/>
    <property type="match status" value="1"/>
</dbReference>
<dbReference type="Pfam" id="PF12796">
    <property type="entry name" value="Ank_2"/>
    <property type="match status" value="1"/>
</dbReference>
<dbReference type="Pfam" id="PF13637">
    <property type="entry name" value="Ank_4"/>
    <property type="match status" value="1"/>
</dbReference>
<dbReference type="Pfam" id="PF00536">
    <property type="entry name" value="SAM_1"/>
    <property type="match status" value="1"/>
</dbReference>
<dbReference type="PRINTS" id="PR01415">
    <property type="entry name" value="ANKYRIN"/>
</dbReference>
<dbReference type="SMART" id="SM00248">
    <property type="entry name" value="ANK"/>
    <property type="match status" value="6"/>
</dbReference>
<dbReference type="SMART" id="SM00454">
    <property type="entry name" value="SAM"/>
    <property type="match status" value="1"/>
</dbReference>
<dbReference type="SUPFAM" id="SSF48403">
    <property type="entry name" value="Ankyrin repeat"/>
    <property type="match status" value="1"/>
</dbReference>
<dbReference type="SUPFAM" id="SSF47769">
    <property type="entry name" value="SAM/Pointed domain"/>
    <property type="match status" value="1"/>
</dbReference>
<dbReference type="PROSITE" id="PS50297">
    <property type="entry name" value="ANK_REP_REGION"/>
    <property type="match status" value="1"/>
</dbReference>
<dbReference type="PROSITE" id="PS50088">
    <property type="entry name" value="ANK_REPEAT"/>
    <property type="match status" value="4"/>
</dbReference>
<dbReference type="PROSITE" id="PS50105">
    <property type="entry name" value="SAM_DOMAIN"/>
    <property type="match status" value="1"/>
</dbReference>
<keyword id="KW-0040">ANK repeat</keyword>
<keyword id="KW-0966">Cell projection</keyword>
<keyword id="KW-0175">Coiled coil</keyword>
<keyword id="KW-0963">Cytoplasm</keyword>
<keyword id="KW-0379">Hydroxylation</keyword>
<keyword id="KW-0597">Phosphoprotein</keyword>
<keyword id="KW-1185">Reference proteome</keyword>
<keyword id="KW-0677">Repeat</keyword>
<keyword id="KW-0832">Ubl conjugation</keyword>
<gene>
    <name type="primary">Anks3</name>
    <name type="synonym">Kiaa1977</name>
</gene>
<comment type="function">
    <text evidence="8">May be involved in vasopressin signaling in the kidney.</text>
</comment>
<comment type="subunit">
    <text evidence="2 6 7 8">Homooligomer (By similarity). Interacts (via SAM domain) with ANKS6 (via SAM domain) (PubMed:25671767, PubMed:26188091, PubMed:26327442). Interacts with BICC1 (PubMed:25671767). Interacts with NPHP1 (PubMed:25671767). Interacts with NEK8 (PubMed:25671767, PubMed:26188091). Interacts with HIF1AN (PubMed:25671767). Interacts with NEK7; this interaction alters the subcellular distribution of NEK7 by preventing its nuclear translocation (PubMed:26188091).</text>
</comment>
<comment type="subcellular location">
    <subcellularLocation>
        <location evidence="8">Cell projection</location>
        <location evidence="8">Cilium</location>
    </subcellularLocation>
    <subcellularLocation>
        <location evidence="7">Cytoplasm</location>
    </subcellularLocation>
</comment>
<comment type="tissue specificity">
    <text evidence="8">Kidney (at protein level).</text>
</comment>
<comment type="domain">
    <text evidence="2">The SAM domain mediates homooligomerization.</text>
</comment>
<comment type="PTM">
    <text evidence="6">Hydroxylated at Asn-96, most probably by HIF1AN.</text>
</comment>
<comment type="PTM">
    <text evidence="8">Phosphorylations at Ser-5, Ser-225, Thr-318, Ser-319, Ser-366 and Ser-369 occur in a NEK7-dependent manner.</text>
</comment>
<comment type="PTM">
    <text evidence="7">Polyubiquitinated.</text>
</comment>
<feature type="chain" id="PRO_0000230778" description="Ankyrin repeat and SAM domain-containing protein 3">
    <location>
        <begin position="1"/>
        <end position="655"/>
    </location>
</feature>
<feature type="repeat" description="ANK 1">
    <location>
        <begin position="34"/>
        <end position="64"/>
    </location>
</feature>
<feature type="repeat" description="ANK 2">
    <location>
        <begin position="68"/>
        <end position="97"/>
    </location>
</feature>
<feature type="repeat" description="ANK 3">
    <location>
        <begin position="101"/>
        <end position="130"/>
    </location>
</feature>
<feature type="repeat" description="ANK 4">
    <location>
        <begin position="134"/>
        <end position="163"/>
    </location>
</feature>
<feature type="repeat" description="ANK 5">
    <location>
        <begin position="168"/>
        <end position="197"/>
    </location>
</feature>
<feature type="repeat" description="ANK 6">
    <location>
        <begin position="201"/>
        <end position="220"/>
    </location>
</feature>
<feature type="domain" description="SAM" evidence="4">
    <location>
        <begin position="424"/>
        <end position="487"/>
    </location>
</feature>
<feature type="region of interest" description="Interaction with NEK7" evidence="7">
    <location>
        <begin position="1"/>
        <end position="421"/>
    </location>
</feature>
<feature type="region of interest" description="Disordered" evidence="5">
    <location>
        <begin position="314"/>
        <end position="426"/>
    </location>
</feature>
<feature type="coiled-coil region" evidence="3">
    <location>
        <begin position="500"/>
        <end position="575"/>
    </location>
</feature>
<feature type="compositionally biased region" description="Basic residues" evidence="5">
    <location>
        <begin position="378"/>
        <end position="395"/>
    </location>
</feature>
<feature type="modified residue" description="Phosphoserine" evidence="1">
    <location>
        <position position="2"/>
    </location>
</feature>
<feature type="modified residue" description="Phosphoserine" evidence="7">
    <location>
        <position position="5"/>
    </location>
</feature>
<feature type="modified residue" description="3-hydroxyasparagine" evidence="6">
    <location>
        <position position="96"/>
    </location>
</feature>
<feature type="modified residue" description="Phosphoserine" evidence="7">
    <location>
        <position position="201"/>
    </location>
</feature>
<feature type="modified residue" description="Phosphoserine" evidence="7">
    <location>
        <position position="225"/>
    </location>
</feature>
<feature type="modified residue" description="Phosphoserine" evidence="7">
    <location>
        <position position="243"/>
    </location>
</feature>
<feature type="modified residue" description="Phosphoserine" evidence="7">
    <location>
        <position position="244"/>
    </location>
</feature>
<feature type="modified residue" description="Phosphoserine" evidence="7">
    <location>
        <position position="245"/>
    </location>
</feature>
<feature type="modified residue" description="Phosphothreonine" evidence="7">
    <location>
        <position position="318"/>
    </location>
</feature>
<feature type="modified residue" description="Phosphoserine" evidence="7">
    <location>
        <position position="319"/>
    </location>
</feature>
<feature type="modified residue" description="Phosphoserine" evidence="7">
    <location>
        <position position="366"/>
    </location>
</feature>
<feature type="modified residue" description="Phosphoserine" evidence="7">
    <location>
        <position position="369"/>
    </location>
</feature>
<feature type="modified residue" description="Phosphoserine" evidence="10">
    <location>
        <position position="373"/>
    </location>
</feature>
<feature type="modified residue" description="Phosphoserine" evidence="7">
    <location>
        <position position="540"/>
    </location>
</feature>
<feature type="mutagenesis site" description="No effect on its interaction with NEK7." evidence="7">
    <original>S</original>
    <variation>A</variation>
    <location>
        <position position="5"/>
    </location>
</feature>
<feature type="mutagenesis site" description="No effect on its interaction with NEK7." evidence="7">
    <original>S</original>
    <variation>A</variation>
    <location>
        <position position="243"/>
    </location>
</feature>
<feature type="mutagenesis site" description="No effect on its interaction with NEK7." evidence="7">
    <original>TS</original>
    <variation>AA</variation>
    <location>
        <begin position="318"/>
        <end position="319"/>
    </location>
</feature>
<feature type="mutagenesis site" description="No effect on its interaction with NEK7." evidence="7">
    <original>S</original>
    <variation>A</variation>
    <location>
        <position position="366"/>
    </location>
</feature>
<feature type="mutagenesis site" description="No effect on its interaction with NEK7." evidence="7">
    <original>S</original>
    <variation>A</variation>
    <location>
        <position position="369"/>
    </location>
</feature>
<feature type="sequence conflict" description="In Ref. 3; BAC98281." evidence="9" ref="3">
    <original>R</original>
    <variation>Q</variation>
    <location>
        <position position="259"/>
    </location>
</feature>
<feature type="sequence conflict" description="In Ref. 1; BAB28279." evidence="9" ref="1">
    <original>R</original>
    <variation>G</variation>
    <location>
        <position position="591"/>
    </location>
</feature>
<organism>
    <name type="scientific">Mus musculus</name>
    <name type="common">Mouse</name>
    <dbReference type="NCBI Taxonomy" id="10090"/>
    <lineage>
        <taxon>Eukaryota</taxon>
        <taxon>Metazoa</taxon>
        <taxon>Chordata</taxon>
        <taxon>Craniata</taxon>
        <taxon>Vertebrata</taxon>
        <taxon>Euteleostomi</taxon>
        <taxon>Mammalia</taxon>
        <taxon>Eutheria</taxon>
        <taxon>Euarchontoglires</taxon>
        <taxon>Glires</taxon>
        <taxon>Rodentia</taxon>
        <taxon>Myomorpha</taxon>
        <taxon>Muroidea</taxon>
        <taxon>Muridae</taxon>
        <taxon>Murinae</taxon>
        <taxon>Mus</taxon>
        <taxon>Mus</taxon>
    </lineage>
</organism>
<name>ANKS3_MOUSE</name>
<reference key="1">
    <citation type="journal article" date="2005" name="Science">
        <title>The transcriptional landscape of the mammalian genome.</title>
        <authorList>
            <person name="Carninci P."/>
            <person name="Kasukawa T."/>
            <person name="Katayama S."/>
            <person name="Gough J."/>
            <person name="Frith M.C."/>
            <person name="Maeda N."/>
            <person name="Oyama R."/>
            <person name="Ravasi T."/>
            <person name="Lenhard B."/>
            <person name="Wells C."/>
            <person name="Kodzius R."/>
            <person name="Shimokawa K."/>
            <person name="Bajic V.B."/>
            <person name="Brenner S.E."/>
            <person name="Batalov S."/>
            <person name="Forrest A.R."/>
            <person name="Zavolan M."/>
            <person name="Davis M.J."/>
            <person name="Wilming L.G."/>
            <person name="Aidinis V."/>
            <person name="Allen J.E."/>
            <person name="Ambesi-Impiombato A."/>
            <person name="Apweiler R."/>
            <person name="Aturaliya R.N."/>
            <person name="Bailey T.L."/>
            <person name="Bansal M."/>
            <person name="Baxter L."/>
            <person name="Beisel K.W."/>
            <person name="Bersano T."/>
            <person name="Bono H."/>
            <person name="Chalk A.M."/>
            <person name="Chiu K.P."/>
            <person name="Choudhary V."/>
            <person name="Christoffels A."/>
            <person name="Clutterbuck D.R."/>
            <person name="Crowe M.L."/>
            <person name="Dalla E."/>
            <person name="Dalrymple B.P."/>
            <person name="de Bono B."/>
            <person name="Della Gatta G."/>
            <person name="di Bernardo D."/>
            <person name="Down T."/>
            <person name="Engstrom P."/>
            <person name="Fagiolini M."/>
            <person name="Faulkner G."/>
            <person name="Fletcher C.F."/>
            <person name="Fukushima T."/>
            <person name="Furuno M."/>
            <person name="Futaki S."/>
            <person name="Gariboldi M."/>
            <person name="Georgii-Hemming P."/>
            <person name="Gingeras T.R."/>
            <person name="Gojobori T."/>
            <person name="Green R.E."/>
            <person name="Gustincich S."/>
            <person name="Harbers M."/>
            <person name="Hayashi Y."/>
            <person name="Hensch T.K."/>
            <person name="Hirokawa N."/>
            <person name="Hill D."/>
            <person name="Huminiecki L."/>
            <person name="Iacono M."/>
            <person name="Ikeo K."/>
            <person name="Iwama A."/>
            <person name="Ishikawa T."/>
            <person name="Jakt M."/>
            <person name="Kanapin A."/>
            <person name="Katoh M."/>
            <person name="Kawasawa Y."/>
            <person name="Kelso J."/>
            <person name="Kitamura H."/>
            <person name="Kitano H."/>
            <person name="Kollias G."/>
            <person name="Krishnan S.P."/>
            <person name="Kruger A."/>
            <person name="Kummerfeld S.K."/>
            <person name="Kurochkin I.V."/>
            <person name="Lareau L.F."/>
            <person name="Lazarevic D."/>
            <person name="Lipovich L."/>
            <person name="Liu J."/>
            <person name="Liuni S."/>
            <person name="McWilliam S."/>
            <person name="Madan Babu M."/>
            <person name="Madera M."/>
            <person name="Marchionni L."/>
            <person name="Matsuda H."/>
            <person name="Matsuzawa S."/>
            <person name="Miki H."/>
            <person name="Mignone F."/>
            <person name="Miyake S."/>
            <person name="Morris K."/>
            <person name="Mottagui-Tabar S."/>
            <person name="Mulder N."/>
            <person name="Nakano N."/>
            <person name="Nakauchi H."/>
            <person name="Ng P."/>
            <person name="Nilsson R."/>
            <person name="Nishiguchi S."/>
            <person name="Nishikawa S."/>
            <person name="Nori F."/>
            <person name="Ohara O."/>
            <person name="Okazaki Y."/>
            <person name="Orlando V."/>
            <person name="Pang K.C."/>
            <person name="Pavan W.J."/>
            <person name="Pavesi G."/>
            <person name="Pesole G."/>
            <person name="Petrovsky N."/>
            <person name="Piazza S."/>
            <person name="Reed J."/>
            <person name="Reid J.F."/>
            <person name="Ring B.Z."/>
            <person name="Ringwald M."/>
            <person name="Rost B."/>
            <person name="Ruan Y."/>
            <person name="Salzberg S.L."/>
            <person name="Sandelin A."/>
            <person name="Schneider C."/>
            <person name="Schoenbach C."/>
            <person name="Sekiguchi K."/>
            <person name="Semple C.A."/>
            <person name="Seno S."/>
            <person name="Sessa L."/>
            <person name="Sheng Y."/>
            <person name="Shibata Y."/>
            <person name="Shimada H."/>
            <person name="Shimada K."/>
            <person name="Silva D."/>
            <person name="Sinclair B."/>
            <person name="Sperling S."/>
            <person name="Stupka E."/>
            <person name="Sugiura K."/>
            <person name="Sultana R."/>
            <person name="Takenaka Y."/>
            <person name="Taki K."/>
            <person name="Tammoja K."/>
            <person name="Tan S.L."/>
            <person name="Tang S."/>
            <person name="Taylor M.S."/>
            <person name="Tegner J."/>
            <person name="Teichmann S.A."/>
            <person name="Ueda H.R."/>
            <person name="van Nimwegen E."/>
            <person name="Verardo R."/>
            <person name="Wei C.L."/>
            <person name="Yagi K."/>
            <person name="Yamanishi H."/>
            <person name="Zabarovsky E."/>
            <person name="Zhu S."/>
            <person name="Zimmer A."/>
            <person name="Hide W."/>
            <person name="Bult C."/>
            <person name="Grimmond S.M."/>
            <person name="Teasdale R.D."/>
            <person name="Liu E.T."/>
            <person name="Brusic V."/>
            <person name="Quackenbush J."/>
            <person name="Wahlestedt C."/>
            <person name="Mattick J.S."/>
            <person name="Hume D.A."/>
            <person name="Kai C."/>
            <person name="Sasaki D."/>
            <person name="Tomaru Y."/>
            <person name="Fukuda S."/>
            <person name="Kanamori-Katayama M."/>
            <person name="Suzuki M."/>
            <person name="Aoki J."/>
            <person name="Arakawa T."/>
            <person name="Iida J."/>
            <person name="Imamura K."/>
            <person name="Itoh M."/>
            <person name="Kato T."/>
            <person name="Kawaji H."/>
            <person name="Kawagashira N."/>
            <person name="Kawashima T."/>
            <person name="Kojima M."/>
            <person name="Kondo S."/>
            <person name="Konno H."/>
            <person name="Nakano K."/>
            <person name="Ninomiya N."/>
            <person name="Nishio T."/>
            <person name="Okada M."/>
            <person name="Plessy C."/>
            <person name="Shibata K."/>
            <person name="Shiraki T."/>
            <person name="Suzuki S."/>
            <person name="Tagami M."/>
            <person name="Waki K."/>
            <person name="Watahiki A."/>
            <person name="Okamura-Oho Y."/>
            <person name="Suzuki H."/>
            <person name="Kawai J."/>
            <person name="Hayashizaki Y."/>
        </authorList>
    </citation>
    <scope>NUCLEOTIDE SEQUENCE [LARGE SCALE MRNA]</scope>
    <source>
        <strain>C57BL/6J</strain>
    </source>
</reference>
<reference key="2">
    <citation type="journal article" date="2004" name="Genome Res.">
        <title>The status, quality, and expansion of the NIH full-length cDNA project: the Mammalian Gene Collection (MGC).</title>
        <authorList>
            <consortium name="The MGC Project Team"/>
        </authorList>
    </citation>
    <scope>NUCLEOTIDE SEQUENCE [LARGE SCALE MRNA]</scope>
    <source>
        <strain>C57BL/6J</strain>
        <tissue>Brain</tissue>
    </source>
</reference>
<reference key="3">
    <citation type="journal article" date="2003" name="DNA Res.">
        <title>Prediction of the coding sequences of mouse homologues of KIAA gene: III. The complete nucleotide sequences of 500 mouse KIAA-homologous cDNAs identified by screening of terminal sequences of cDNA clones randomly sampled from size-fractionated libraries.</title>
        <authorList>
            <person name="Okazaki N."/>
            <person name="Kikuno R."/>
            <person name="Ohara R."/>
            <person name="Inamoto S."/>
            <person name="Koseki H."/>
            <person name="Hiraoka S."/>
            <person name="Saga Y."/>
            <person name="Nagase T."/>
            <person name="Ohara O."/>
            <person name="Koga H."/>
        </authorList>
    </citation>
    <scope>NUCLEOTIDE SEQUENCE [LARGE SCALE MRNA] OF 57-630</scope>
    <source>
        <tissue>Embryonic tail</tissue>
    </source>
</reference>
<reference key="4">
    <citation type="submission" date="2003-12" db="EMBL/GenBank/DDBJ databases">
        <authorList>
            <person name="Okazaki N."/>
            <person name="Kikuno R."/>
            <person name="Nagase T."/>
            <person name="Ohara O."/>
            <person name="Koga H."/>
        </authorList>
    </citation>
    <scope>SEQUENCE REVISION</scope>
</reference>
<reference key="5">
    <citation type="journal article" date="2010" name="Cell">
        <title>A tissue-specific atlas of mouse protein phosphorylation and expression.</title>
        <authorList>
            <person name="Huttlin E.L."/>
            <person name="Jedrychowski M.P."/>
            <person name="Elias J.E."/>
            <person name="Goswami T."/>
            <person name="Rad R."/>
            <person name="Beausoleil S.A."/>
            <person name="Villen J."/>
            <person name="Haas W."/>
            <person name="Sowa M.E."/>
            <person name="Gygi S.P."/>
        </authorList>
    </citation>
    <scope>PHOSPHORYLATION [LARGE SCALE ANALYSIS] AT SER-373</scope>
    <scope>IDENTIFICATION BY MASS SPECTROMETRY [LARGE SCALE ANALYSIS]</scope>
    <source>
        <tissue>Kidney</tissue>
    </source>
</reference>
<reference key="6">
    <citation type="journal article" date="2015" name="Biochem. Biophys. Res. Commun.">
        <title>Anks3 alters the sub-cellular localization of the Nek7 kinase.</title>
        <authorList>
            <person name="Ramachandran H."/>
            <person name="Engel C."/>
            <person name="Mueller B."/>
            <person name="Dengjel J."/>
            <person name="Walz G."/>
            <person name="Yakulov T.A."/>
        </authorList>
    </citation>
    <scope>INTERACTION WITH ANKS6; NEK7 AND NEK8</scope>
    <scope>SUBCELLULAR LOCATION</scope>
    <scope>PHOSPHORYLATION AT SER-5; SER-201; SER-225; SER-243; SER-244; SER-245; THR-318; SER-319; SER-366; SER-369 AND SER-540</scope>
    <scope>MUTAGENESIS OF SER-5; SER-243; 318-THR-SER-319; SER-366 AND SER-369</scope>
</reference>
<reference key="7">
    <citation type="journal article" date="2015" name="Kidney Int.">
        <title>Anks3 interacts with nephronophthisis proteins and is required for normal renal development.</title>
        <authorList>
            <person name="Yakulov T.A."/>
            <person name="Yasunaga T."/>
            <person name="Ramachandran H."/>
            <person name="Engel C."/>
            <person name="Mueller B."/>
            <person name="Hoff S."/>
            <person name="Dengjel J."/>
            <person name="Lienkamp S.S."/>
            <person name="Walz G."/>
        </authorList>
    </citation>
    <scope>INTERACTION WITH ANKS6; BICC1; NPHP1; NEK8 AND HIF1AN</scope>
    <scope>HYDROXYLATION AT ASN-96</scope>
    <scope>MASS SPECTROMETRY</scope>
</reference>
<reference key="8">
    <citation type="journal article" date="2015" name="PLoS ONE">
        <title>ANKS3 Co-Localises with ANKS6 in Mouse Renal Cilia and Is Associated with Vasopressin Signaling and Apoptosis In Vivo in Mice.</title>
        <authorList>
            <person name="Delestre L."/>
            <person name="Bakey Z."/>
            <person name="Prado C."/>
            <person name="Hoffmann S."/>
            <person name="Bihoreau M.T."/>
            <person name="Lelongt B."/>
            <person name="Gauguier D."/>
        </authorList>
    </citation>
    <scope>FUNCTION</scope>
    <scope>SUBCELLULAR LOCATION</scope>
    <scope>INTERACTION WITH ANKS6</scope>
    <scope>TISSUE SPECIFICITY</scope>
</reference>
<accession>Q9CZK6</accession>
<accession>Q6ZPF6</accession>
<accession>Q80X46</accession>